<gene>
    <name type="primary">Cd164</name>
</gene>
<organism>
    <name type="scientific">Mus musculus</name>
    <name type="common">Mouse</name>
    <dbReference type="NCBI Taxonomy" id="10090"/>
    <lineage>
        <taxon>Eukaryota</taxon>
        <taxon>Metazoa</taxon>
        <taxon>Chordata</taxon>
        <taxon>Craniata</taxon>
        <taxon>Vertebrata</taxon>
        <taxon>Euteleostomi</taxon>
        <taxon>Mammalia</taxon>
        <taxon>Eutheria</taxon>
        <taxon>Euarchontoglires</taxon>
        <taxon>Glires</taxon>
        <taxon>Rodentia</taxon>
        <taxon>Myomorpha</taxon>
        <taxon>Muroidea</taxon>
        <taxon>Muridae</taxon>
        <taxon>Murinae</taxon>
        <taxon>Mus</taxon>
        <taxon>Mus</taxon>
    </lineage>
</organism>
<evidence type="ECO:0000250" key="1"/>
<evidence type="ECO:0000250" key="2">
    <source>
        <dbReference type="UniProtKB" id="Q04900"/>
    </source>
</evidence>
<evidence type="ECO:0000255" key="3"/>
<evidence type="ECO:0000256" key="4">
    <source>
        <dbReference type="SAM" id="MobiDB-lite"/>
    </source>
</evidence>
<evidence type="ECO:0000269" key="5">
    <source>
    </source>
</evidence>
<evidence type="ECO:0000269" key="6">
    <source>
    </source>
</evidence>
<evidence type="ECO:0000269" key="7">
    <source>
    </source>
</evidence>
<evidence type="ECO:0000269" key="8">
    <source>
    </source>
</evidence>
<evidence type="ECO:0000305" key="9"/>
<dbReference type="EMBL" id="AB028895">
    <property type="protein sequence ID" value="BAA78909.1"/>
    <property type="molecule type" value="mRNA"/>
</dbReference>
<dbReference type="EMBL" id="AF299345">
    <property type="protein sequence ID" value="AAG53910.1"/>
    <property type="molecule type" value="mRNA"/>
</dbReference>
<dbReference type="EMBL" id="AF299344">
    <property type="protein sequence ID" value="AAG53909.1"/>
    <property type="molecule type" value="Genomic_DNA"/>
</dbReference>
<dbReference type="EMBL" id="AB014464">
    <property type="protein sequence ID" value="BAA34547.1"/>
    <property type="molecule type" value="mRNA"/>
</dbReference>
<dbReference type="EMBL" id="AK145131">
    <property type="protein sequence ID" value="BAE26251.1"/>
    <property type="molecule type" value="mRNA"/>
</dbReference>
<dbReference type="EMBL" id="AK169275">
    <property type="protein sequence ID" value="BAE41034.1"/>
    <property type="molecule type" value="mRNA"/>
</dbReference>
<dbReference type="EMBL" id="BC005414">
    <property type="protein sequence ID" value="AAH05414.1"/>
    <property type="molecule type" value="mRNA"/>
</dbReference>
<dbReference type="CCDS" id="CCDS23806.1"/>
<dbReference type="RefSeq" id="NP_058594.1">
    <property type="nucleotide sequence ID" value="NM_016898.2"/>
</dbReference>
<dbReference type="SMR" id="Q9R0L9"/>
<dbReference type="FunCoup" id="Q9R0L9">
    <property type="interactions" value="1224"/>
</dbReference>
<dbReference type="IntAct" id="Q9R0L9">
    <property type="interactions" value="1"/>
</dbReference>
<dbReference type="STRING" id="10090.ENSMUSP00000019962"/>
<dbReference type="GlyCosmos" id="Q9R0L9">
    <property type="glycosylation" value="9 sites, No reported glycans"/>
</dbReference>
<dbReference type="GlyGen" id="Q9R0L9">
    <property type="glycosylation" value="11 sites, 4 N-linked glycans (4 sites)"/>
</dbReference>
<dbReference type="PhosphoSitePlus" id="Q9R0L9"/>
<dbReference type="PaxDb" id="10090-ENSMUSP00000019962"/>
<dbReference type="ProteomicsDB" id="291458"/>
<dbReference type="Antibodypedia" id="2460">
    <property type="antibodies" value="282 antibodies from 29 providers"/>
</dbReference>
<dbReference type="DNASU" id="53599"/>
<dbReference type="Ensembl" id="ENSMUST00000019962.15">
    <property type="protein sequence ID" value="ENSMUSP00000019962.9"/>
    <property type="gene ID" value="ENSMUSG00000019818.16"/>
</dbReference>
<dbReference type="GeneID" id="53599"/>
<dbReference type="KEGG" id="mmu:53599"/>
<dbReference type="UCSC" id="uc007exv.1">
    <property type="organism name" value="mouse"/>
</dbReference>
<dbReference type="AGR" id="MGI:1859568"/>
<dbReference type="CTD" id="8763"/>
<dbReference type="MGI" id="MGI:1859568">
    <property type="gene designation" value="Cd164"/>
</dbReference>
<dbReference type="VEuPathDB" id="HostDB:ENSMUSG00000019818"/>
<dbReference type="eggNOG" id="ENOG502S7HA">
    <property type="taxonomic scope" value="Eukaryota"/>
</dbReference>
<dbReference type="GeneTree" id="ENSGT00530000063929"/>
<dbReference type="HOGENOM" id="CLU_101414_0_0_1"/>
<dbReference type="InParanoid" id="Q9R0L9"/>
<dbReference type="OMA" id="CFWMECK"/>
<dbReference type="OrthoDB" id="6160056at2759"/>
<dbReference type="PhylomeDB" id="Q9R0L9"/>
<dbReference type="TreeFam" id="TF333380"/>
<dbReference type="BioGRID-ORCS" id="53599">
    <property type="hits" value="3 hits in 79 CRISPR screens"/>
</dbReference>
<dbReference type="ChiTaRS" id="Cd164">
    <property type="organism name" value="mouse"/>
</dbReference>
<dbReference type="PRO" id="PR:Q9R0L9"/>
<dbReference type="Proteomes" id="UP000000589">
    <property type="component" value="Chromosome 10"/>
</dbReference>
<dbReference type="RNAct" id="Q9R0L9">
    <property type="molecule type" value="protein"/>
</dbReference>
<dbReference type="Bgee" id="ENSMUSG00000019818">
    <property type="expression patterns" value="Expressed in parotid gland and 287 other cell types or tissues"/>
</dbReference>
<dbReference type="ExpressionAtlas" id="Q9R0L9">
    <property type="expression patterns" value="baseline and differential"/>
</dbReference>
<dbReference type="GO" id="GO:0005768">
    <property type="term" value="C:endosome"/>
    <property type="evidence" value="ECO:0000250"/>
    <property type="project" value="UniProtKB"/>
</dbReference>
<dbReference type="GO" id="GO:0010008">
    <property type="term" value="C:endosome membrane"/>
    <property type="evidence" value="ECO:0007669"/>
    <property type="project" value="UniProtKB-SubCell"/>
</dbReference>
<dbReference type="GO" id="GO:0005765">
    <property type="term" value="C:lysosomal membrane"/>
    <property type="evidence" value="ECO:0007669"/>
    <property type="project" value="UniProtKB-SubCell"/>
</dbReference>
<dbReference type="GO" id="GO:0005886">
    <property type="term" value="C:plasma membrane"/>
    <property type="evidence" value="ECO:0000250"/>
    <property type="project" value="UniProtKB"/>
</dbReference>
<dbReference type="GO" id="GO:0007155">
    <property type="term" value="P:cell adhesion"/>
    <property type="evidence" value="ECO:0000266"/>
    <property type="project" value="MGI"/>
</dbReference>
<dbReference type="GO" id="GO:0007157">
    <property type="term" value="P:heterophilic cell-cell adhesion via plasma membrane cell adhesion molecules"/>
    <property type="evidence" value="ECO:0000266"/>
    <property type="project" value="MGI"/>
</dbReference>
<dbReference type="GO" id="GO:0007517">
    <property type="term" value="P:muscle organ development"/>
    <property type="evidence" value="ECO:0007669"/>
    <property type="project" value="UniProtKB-KW"/>
</dbReference>
<dbReference type="InterPro" id="IPR007947">
    <property type="entry name" value="CD164_MGC24"/>
</dbReference>
<dbReference type="PANTHER" id="PTHR11337">
    <property type="entry name" value="MUCIN/PORIMIN"/>
    <property type="match status" value="1"/>
</dbReference>
<dbReference type="PANTHER" id="PTHR11337:SF12">
    <property type="entry name" value="SIALOMUCIN CORE PROTEIN 24"/>
    <property type="match status" value="1"/>
</dbReference>
<dbReference type="Pfam" id="PF05283">
    <property type="entry name" value="MGC-24"/>
    <property type="match status" value="1"/>
</dbReference>
<dbReference type="PRINTS" id="PR01701">
    <property type="entry name" value="CD164ANTIGEN"/>
</dbReference>
<protein>
    <recommendedName>
        <fullName>Sialomucin core protein 24</fullName>
        <shortName>MUC-24</shortName>
    </recommendedName>
    <alternativeName>
        <fullName>Endolyn</fullName>
    </alternativeName>
    <alternativeName>
        <fullName>Multi-glycosylated core protein 24</fullName>
        <shortName>MGC-24</shortName>
        <shortName>MGC-24v</shortName>
    </alternativeName>
    <cdAntigenName>CD164</cdAntigenName>
</protein>
<accession>Q9R0L9</accession>
<accession>Q3UM47</accession>
<accession>Q9Z317</accession>
<keyword id="KW-0130">Cell adhesion</keyword>
<keyword id="KW-1003">Cell membrane</keyword>
<keyword id="KW-0967">Endosome</keyword>
<keyword id="KW-0325">Glycoprotein</keyword>
<keyword id="KW-0458">Lysosome</keyword>
<keyword id="KW-0472">Membrane</keyword>
<keyword id="KW-0517">Myogenesis</keyword>
<keyword id="KW-1185">Reference proteome</keyword>
<keyword id="KW-0732">Signal</keyword>
<keyword id="KW-0812">Transmembrane</keyword>
<keyword id="KW-1133">Transmembrane helix</keyword>
<feature type="signal peptide" evidence="3">
    <location>
        <begin position="1"/>
        <end position="23"/>
    </location>
</feature>
<feature type="chain" id="PRO_0000383341" description="Sialomucin core protein 24">
    <location>
        <begin position="24"/>
        <end position="197"/>
    </location>
</feature>
<feature type="topological domain" description="Extracellular" evidence="3">
    <location>
        <begin position="24"/>
        <end position="162"/>
    </location>
</feature>
<feature type="transmembrane region" description="Helical" evidence="3">
    <location>
        <begin position="163"/>
        <end position="183"/>
    </location>
</feature>
<feature type="topological domain" description="Cytoplasmic" evidence="3">
    <location>
        <begin position="184"/>
        <end position="197"/>
    </location>
</feature>
<feature type="region of interest" description="Disordered" evidence="4">
    <location>
        <begin position="116"/>
        <end position="156"/>
    </location>
</feature>
<feature type="region of interest" description="Required for endosomal and lysosomal localization" evidence="1">
    <location>
        <begin position="191"/>
        <end position="197"/>
    </location>
</feature>
<feature type="compositionally biased region" description="Low complexity" evidence="4">
    <location>
        <begin position="121"/>
        <end position="152"/>
    </location>
</feature>
<feature type="glycosylation site" description="N-linked (GlcNAc...) asparagine" evidence="3">
    <location>
        <position position="26"/>
    </location>
</feature>
<feature type="glycosylation site" description="N-linked (GlcNAc...) asparagine" evidence="3">
    <location>
        <position position="33"/>
    </location>
</feature>
<feature type="glycosylation site" description="N-linked (GlcNAc...) asparagine" evidence="3">
    <location>
        <position position="69"/>
    </location>
</feature>
<feature type="glycosylation site" description="N-linked (GlcNAc...) asparagine" evidence="3">
    <location>
        <position position="75"/>
    </location>
</feature>
<feature type="glycosylation site" description="N-linked (GlcNAc...) asparagine" evidence="3">
    <location>
        <position position="87"/>
    </location>
</feature>
<feature type="glycosylation site" description="N-linked (GlcNAc...) asparagine" evidence="3">
    <location>
        <position position="98"/>
    </location>
</feature>
<feature type="glycosylation site" description="N-linked (GlcNAc...) asparagine" evidence="3">
    <location>
        <position position="103"/>
    </location>
</feature>
<feature type="glycosylation site" description="N-linked (GlcNAc...) asparagine" evidence="3">
    <location>
        <position position="120"/>
    </location>
</feature>
<feature type="glycosylation site" description="N-linked (GlcNAc...) asparagine" evidence="3">
    <location>
        <position position="146"/>
    </location>
</feature>
<feature type="mutagenesis site" description="Increased targeting to the endosomal/lysosomal compartment and reduced myotube formation." evidence="7">
    <original>N</original>
    <variation>G</variation>
    <location>
        <position position="193"/>
    </location>
</feature>
<feature type="mutagenesis site" description="Inefficient targeting to the endosomal/lysosomal compartment and enhanced myotube formation." evidence="7">
    <original>Y</original>
    <variation>A</variation>
    <location>
        <position position="194"/>
    </location>
</feature>
<feature type="sequence conflict" description="In Ref. 4; BAE26251." evidence="9" ref="4">
    <original>S</original>
    <variation>L</variation>
    <location>
        <position position="2"/>
    </location>
</feature>
<feature type="sequence conflict" description="In Ref. 3; BAA34547." evidence="9" ref="3">
    <original>QP</original>
    <variation>HA</variation>
    <location>
        <begin position="24"/>
        <end position="25"/>
    </location>
</feature>
<reference key="1">
    <citation type="journal article" date="1999" name="Eur. J. Biochem.">
        <title>Genomic analysis of a murine cell-surface sialomucin, MGC-24/CD164.</title>
        <authorList>
            <person name="Kurosawa N."/>
            <person name="Kanemitsu Y."/>
            <person name="Matsui T."/>
            <person name="Shimada K."/>
            <person name="Ishihama H."/>
            <person name="Muramatsu T."/>
        </authorList>
    </citation>
    <scope>NUCLEOTIDE SEQUENCE [MRNA]</scope>
    <scope>TISSUE SPECIFICITY</scope>
    <scope>DEVELOPMENTAL STAGE</scope>
</reference>
<reference key="2">
    <citation type="journal article" date="2001" name="J. Biol. Chem.">
        <title>Relationship between novel isoforms, functionally important domains, and subcellular distribution of CD164/endolyn.</title>
        <authorList>
            <person name="Chan J.Y.-H."/>
            <person name="Lee-Prudhoe J.E."/>
            <person name="Jorgensen B."/>
            <person name="Ihrke G."/>
            <person name="Doyonnas R."/>
            <person name="Zannettino A.C.W."/>
            <person name="Buckle V.J."/>
            <person name="Ward C.J."/>
            <person name="Simmons P.J."/>
            <person name="Watt S.M."/>
        </authorList>
    </citation>
    <scope>NUCLEOTIDE SEQUENCE [GENOMIC DNA / MRNA]</scope>
    <scope>TISSUE SPECIFICITY</scope>
</reference>
<reference key="3">
    <citation type="submission" date="1998-05" db="EMBL/GenBank/DDBJ databases">
        <title>Mouse MGC-24v.</title>
        <authorList>
            <person name="Kurosawa N."/>
            <person name="Matsui T."/>
            <person name="Muramatsu T."/>
        </authorList>
    </citation>
    <scope>NUCLEOTIDE SEQUENCE [MRNA]</scope>
    <source>
        <strain>ICR</strain>
        <tissue>Brain</tissue>
    </source>
</reference>
<reference key="4">
    <citation type="journal article" date="2005" name="Science">
        <title>The transcriptional landscape of the mammalian genome.</title>
        <authorList>
            <person name="Carninci P."/>
            <person name="Kasukawa T."/>
            <person name="Katayama S."/>
            <person name="Gough J."/>
            <person name="Frith M.C."/>
            <person name="Maeda N."/>
            <person name="Oyama R."/>
            <person name="Ravasi T."/>
            <person name="Lenhard B."/>
            <person name="Wells C."/>
            <person name="Kodzius R."/>
            <person name="Shimokawa K."/>
            <person name="Bajic V.B."/>
            <person name="Brenner S.E."/>
            <person name="Batalov S."/>
            <person name="Forrest A.R."/>
            <person name="Zavolan M."/>
            <person name="Davis M.J."/>
            <person name="Wilming L.G."/>
            <person name="Aidinis V."/>
            <person name="Allen J.E."/>
            <person name="Ambesi-Impiombato A."/>
            <person name="Apweiler R."/>
            <person name="Aturaliya R.N."/>
            <person name="Bailey T.L."/>
            <person name="Bansal M."/>
            <person name="Baxter L."/>
            <person name="Beisel K.W."/>
            <person name="Bersano T."/>
            <person name="Bono H."/>
            <person name="Chalk A.M."/>
            <person name="Chiu K.P."/>
            <person name="Choudhary V."/>
            <person name="Christoffels A."/>
            <person name="Clutterbuck D.R."/>
            <person name="Crowe M.L."/>
            <person name="Dalla E."/>
            <person name="Dalrymple B.P."/>
            <person name="de Bono B."/>
            <person name="Della Gatta G."/>
            <person name="di Bernardo D."/>
            <person name="Down T."/>
            <person name="Engstrom P."/>
            <person name="Fagiolini M."/>
            <person name="Faulkner G."/>
            <person name="Fletcher C.F."/>
            <person name="Fukushima T."/>
            <person name="Furuno M."/>
            <person name="Futaki S."/>
            <person name="Gariboldi M."/>
            <person name="Georgii-Hemming P."/>
            <person name="Gingeras T.R."/>
            <person name="Gojobori T."/>
            <person name="Green R.E."/>
            <person name="Gustincich S."/>
            <person name="Harbers M."/>
            <person name="Hayashi Y."/>
            <person name="Hensch T.K."/>
            <person name="Hirokawa N."/>
            <person name="Hill D."/>
            <person name="Huminiecki L."/>
            <person name="Iacono M."/>
            <person name="Ikeo K."/>
            <person name="Iwama A."/>
            <person name="Ishikawa T."/>
            <person name="Jakt M."/>
            <person name="Kanapin A."/>
            <person name="Katoh M."/>
            <person name="Kawasawa Y."/>
            <person name="Kelso J."/>
            <person name="Kitamura H."/>
            <person name="Kitano H."/>
            <person name="Kollias G."/>
            <person name="Krishnan S.P."/>
            <person name="Kruger A."/>
            <person name="Kummerfeld S.K."/>
            <person name="Kurochkin I.V."/>
            <person name="Lareau L.F."/>
            <person name="Lazarevic D."/>
            <person name="Lipovich L."/>
            <person name="Liu J."/>
            <person name="Liuni S."/>
            <person name="McWilliam S."/>
            <person name="Madan Babu M."/>
            <person name="Madera M."/>
            <person name="Marchionni L."/>
            <person name="Matsuda H."/>
            <person name="Matsuzawa S."/>
            <person name="Miki H."/>
            <person name="Mignone F."/>
            <person name="Miyake S."/>
            <person name="Morris K."/>
            <person name="Mottagui-Tabar S."/>
            <person name="Mulder N."/>
            <person name="Nakano N."/>
            <person name="Nakauchi H."/>
            <person name="Ng P."/>
            <person name="Nilsson R."/>
            <person name="Nishiguchi S."/>
            <person name="Nishikawa S."/>
            <person name="Nori F."/>
            <person name="Ohara O."/>
            <person name="Okazaki Y."/>
            <person name="Orlando V."/>
            <person name="Pang K.C."/>
            <person name="Pavan W.J."/>
            <person name="Pavesi G."/>
            <person name="Pesole G."/>
            <person name="Petrovsky N."/>
            <person name="Piazza S."/>
            <person name="Reed J."/>
            <person name="Reid J.F."/>
            <person name="Ring B.Z."/>
            <person name="Ringwald M."/>
            <person name="Rost B."/>
            <person name="Ruan Y."/>
            <person name="Salzberg S.L."/>
            <person name="Sandelin A."/>
            <person name="Schneider C."/>
            <person name="Schoenbach C."/>
            <person name="Sekiguchi K."/>
            <person name="Semple C.A."/>
            <person name="Seno S."/>
            <person name="Sessa L."/>
            <person name="Sheng Y."/>
            <person name="Shibata Y."/>
            <person name="Shimada H."/>
            <person name="Shimada K."/>
            <person name="Silva D."/>
            <person name="Sinclair B."/>
            <person name="Sperling S."/>
            <person name="Stupka E."/>
            <person name="Sugiura K."/>
            <person name="Sultana R."/>
            <person name="Takenaka Y."/>
            <person name="Taki K."/>
            <person name="Tammoja K."/>
            <person name="Tan S.L."/>
            <person name="Tang S."/>
            <person name="Taylor M.S."/>
            <person name="Tegner J."/>
            <person name="Teichmann S.A."/>
            <person name="Ueda H.R."/>
            <person name="van Nimwegen E."/>
            <person name="Verardo R."/>
            <person name="Wei C.L."/>
            <person name="Yagi K."/>
            <person name="Yamanishi H."/>
            <person name="Zabarovsky E."/>
            <person name="Zhu S."/>
            <person name="Zimmer A."/>
            <person name="Hide W."/>
            <person name="Bult C."/>
            <person name="Grimmond S.M."/>
            <person name="Teasdale R.D."/>
            <person name="Liu E.T."/>
            <person name="Brusic V."/>
            <person name="Quackenbush J."/>
            <person name="Wahlestedt C."/>
            <person name="Mattick J.S."/>
            <person name="Hume D.A."/>
            <person name="Kai C."/>
            <person name="Sasaki D."/>
            <person name="Tomaru Y."/>
            <person name="Fukuda S."/>
            <person name="Kanamori-Katayama M."/>
            <person name="Suzuki M."/>
            <person name="Aoki J."/>
            <person name="Arakawa T."/>
            <person name="Iida J."/>
            <person name="Imamura K."/>
            <person name="Itoh M."/>
            <person name="Kato T."/>
            <person name="Kawaji H."/>
            <person name="Kawagashira N."/>
            <person name="Kawashima T."/>
            <person name="Kojima M."/>
            <person name="Kondo S."/>
            <person name="Konno H."/>
            <person name="Nakano K."/>
            <person name="Ninomiya N."/>
            <person name="Nishio T."/>
            <person name="Okada M."/>
            <person name="Plessy C."/>
            <person name="Shibata K."/>
            <person name="Shiraki T."/>
            <person name="Suzuki S."/>
            <person name="Tagami M."/>
            <person name="Waki K."/>
            <person name="Watahiki A."/>
            <person name="Okamura-Oho Y."/>
            <person name="Suzuki H."/>
            <person name="Kawai J."/>
            <person name="Hayashizaki Y."/>
        </authorList>
    </citation>
    <scope>NUCLEOTIDE SEQUENCE [LARGE SCALE MRNA]</scope>
    <source>
        <tissue>Mammary gland</tissue>
    </source>
</reference>
<reference key="5">
    <citation type="journal article" date="2004" name="Genome Res.">
        <title>The status, quality, and expansion of the NIH full-length cDNA project: the Mammalian Gene Collection (MGC).</title>
        <authorList>
            <consortium name="The MGC Project Team"/>
        </authorList>
    </citation>
    <scope>NUCLEOTIDE SEQUENCE [LARGE SCALE MRNA]</scope>
    <source>
        <strain>FVB/N</strain>
        <tissue>Mammary tumor</tissue>
    </source>
</reference>
<reference key="6">
    <citation type="journal article" date="2008" name="J. Biol. Chem.">
        <title>Regulation of myoblast motility and fusion by the CXCR4-associated sialomucin, CD164.</title>
        <authorList>
            <person name="Bae G.-U."/>
            <person name="Gaio U."/>
            <person name="Yang Y.-J."/>
            <person name="Lee H.-J."/>
            <person name="Kang J.-S."/>
            <person name="Krauss R.S."/>
        </authorList>
    </citation>
    <scope>FUNCTION</scope>
    <scope>INTERACTION WITH CXCR4</scope>
    <scope>DEVELOPMENTAL STAGE</scope>
    <scope>MUTAGENESIS OF ASN-193 AND TYR-194</scope>
</reference>
<reference key="7">
    <citation type="journal article" date="2015" name="PLoS Genet.">
        <title>A novel locus harbouring a functional CD164 nonsense mutation identified in a large Danish family with nonsyndromic hearing impairment.</title>
        <authorList>
            <person name="Nyegaard M."/>
            <person name="Rendtorff N.D."/>
            <person name="Nielsen M.S."/>
            <person name="Corydon T.J."/>
            <person name="Demontis D."/>
            <person name="Starnawska A."/>
            <person name="Hedemand A."/>
            <person name="Buniello A."/>
            <person name="Niola F."/>
            <person name="Overgaard M.T."/>
            <person name="Leal S.M."/>
            <person name="Ahmad W."/>
            <person name="Wikman F.P."/>
            <person name="Petersen K.B."/>
            <person name="Crueger D.G."/>
            <person name="Oostrik J."/>
            <person name="Kremer H."/>
            <person name="Tommerup N."/>
            <person name="Froedin M."/>
            <person name="Steel K.P."/>
            <person name="Tranebjaerg L."/>
            <person name="Boerglum A.D."/>
        </authorList>
    </citation>
    <scope>TISSUE SPECIFICITY</scope>
</reference>
<proteinExistence type="evidence at protein level"/>
<name>MUC24_MOUSE</name>
<sequence>MSGSSRRLLWAATCLAVLCVSAAQPNITTLAPNVTEVPTTTTKVVPTTQMPTVLPETCASFNSCVSCVNATFTNNITCFWLHCQEANKTYCANEPLSNCSQVNRTDLCSVIPPTTPVPTNSTAKPTTRPSSPTPTPSVVTSAGTTNTTLTPTSQPERKSTFDAASFIGGIVLVLGVQAVIFFLYKFCKSKERNYHTL</sequence>
<comment type="function">
    <text evidence="2 7">Sialomucin that may play a key role in hematopoiesis. May be involved in cell adhesion (By similarity). Promotes myogenesis by enhancing CXCR4-dependent cell motility. Positively regulates myoblast migration and promotes myoblast fusion into myotubes.</text>
</comment>
<comment type="subunit">
    <text evidence="7">Interacts with CXCR4.</text>
</comment>
<comment type="subcellular location">
    <subcellularLocation>
        <location evidence="2">Lysosome membrane</location>
        <topology evidence="2">Single-pass type I membrane protein</topology>
    </subcellularLocation>
    <subcellularLocation>
        <location evidence="2">Endosome membrane</location>
        <topology evidence="2">Single-pass type I membrane protein</topology>
    </subcellularLocation>
    <subcellularLocation>
        <location evidence="2">Cell membrane</location>
        <topology evidence="2">Single-pass type I membrane protein</topology>
    </subcellularLocation>
</comment>
<comment type="tissue specificity">
    <text evidence="5 6 8">Expressed at high levels in the submaxillary gland and kidney, at moderate levels in the brain, heart, lung, liver, intestine, testis, muscle and bone marrow, and at low levels in the pancreas, spleen and thymus. In the ear, expressed in the inner and outer hair cells of the organ of Corti, cells of Kolliker's organ, cells in the lateral cochlear wall behind the spiral prominence and cells of the stria vascularis (PubMed:26197441).</text>
</comment>
<comment type="developmental stage">
    <text evidence="5 7">During embryogenesis, expression in found in all stages examined, with the highest levels of expression at early stages (8.5 dpc) and moderate levels of expression being found at mid- to late stages of embryogenesis. Expressed during early stages of skeletal muscle development. At embryonic stages 9.5 dpc and 10.5 dpc, expressed strongly in the dorsal somite (the structure of origin for skeletal muscle precursors). It is also expressed at later stages of muscle development;.</text>
</comment>
<comment type="PTM">
    <text evidence="1">Highly N- and O-glycosylated; contains sialic acid.</text>
</comment>
<comment type="similarity">
    <text evidence="9">Belongs to the CD164 family.</text>
</comment>